<name>HDFR_SALSV</name>
<gene>
    <name evidence="1" type="primary">hdfR</name>
    <name type="ordered locus">SeSA_A4108</name>
</gene>
<comment type="function">
    <text evidence="1">Negatively regulates the transcription of the flagellar master operon flhDC by binding to the upstream region of the operon.</text>
</comment>
<comment type="similarity">
    <text evidence="2">Belongs to the LysR transcriptional regulatory family.</text>
</comment>
<reference key="1">
    <citation type="journal article" date="2011" name="J. Bacteriol.">
        <title>Comparative genomics of 28 Salmonella enterica isolates: evidence for CRISPR-mediated adaptive sublineage evolution.</title>
        <authorList>
            <person name="Fricke W.F."/>
            <person name="Mammel M.K."/>
            <person name="McDermott P.F."/>
            <person name="Tartera C."/>
            <person name="White D.G."/>
            <person name="Leclerc J.E."/>
            <person name="Ravel J."/>
            <person name="Cebula T.A."/>
        </authorList>
    </citation>
    <scope>NUCLEOTIDE SEQUENCE [LARGE SCALE GENOMIC DNA]</scope>
    <source>
        <strain>CVM19633</strain>
    </source>
</reference>
<dbReference type="EMBL" id="CP001127">
    <property type="protein sequence ID" value="ACF92466.1"/>
    <property type="molecule type" value="Genomic_DNA"/>
</dbReference>
<dbReference type="SMR" id="B4TNR5"/>
<dbReference type="KEGG" id="sew:SeSA_A4108"/>
<dbReference type="HOGENOM" id="CLU_039613_8_2_6"/>
<dbReference type="Proteomes" id="UP000001865">
    <property type="component" value="Chromosome"/>
</dbReference>
<dbReference type="GO" id="GO:0003677">
    <property type="term" value="F:DNA binding"/>
    <property type="evidence" value="ECO:0007669"/>
    <property type="project" value="UniProtKB-KW"/>
</dbReference>
<dbReference type="GO" id="GO:0003700">
    <property type="term" value="F:DNA-binding transcription factor activity"/>
    <property type="evidence" value="ECO:0007669"/>
    <property type="project" value="UniProtKB-UniRule"/>
</dbReference>
<dbReference type="GO" id="GO:0045892">
    <property type="term" value="P:negative regulation of DNA-templated transcription"/>
    <property type="evidence" value="ECO:0007669"/>
    <property type="project" value="UniProtKB-UniRule"/>
</dbReference>
<dbReference type="FunFam" id="1.10.10.10:FF:000001">
    <property type="entry name" value="LysR family transcriptional regulator"/>
    <property type="match status" value="1"/>
</dbReference>
<dbReference type="Gene3D" id="1.10.10.10">
    <property type="entry name" value="Winged helix-like DNA-binding domain superfamily/Winged helix DNA-binding domain"/>
    <property type="match status" value="1"/>
</dbReference>
<dbReference type="HAMAP" id="MF_01233">
    <property type="entry name" value="HTH_type_HdfR"/>
    <property type="match status" value="1"/>
</dbReference>
<dbReference type="InterPro" id="IPR050176">
    <property type="entry name" value="LTTR"/>
</dbReference>
<dbReference type="InterPro" id="IPR005119">
    <property type="entry name" value="LysR_subst-bd"/>
</dbReference>
<dbReference type="InterPro" id="IPR020890">
    <property type="entry name" value="Tscrpt_reg_HTH_HdfR"/>
</dbReference>
<dbReference type="InterPro" id="IPR000847">
    <property type="entry name" value="Tscrpt_reg_HTH_LysR"/>
</dbReference>
<dbReference type="InterPro" id="IPR036388">
    <property type="entry name" value="WH-like_DNA-bd_sf"/>
</dbReference>
<dbReference type="InterPro" id="IPR036390">
    <property type="entry name" value="WH_DNA-bd_sf"/>
</dbReference>
<dbReference type="NCBIfam" id="NF002946">
    <property type="entry name" value="PRK03601.1"/>
    <property type="match status" value="1"/>
</dbReference>
<dbReference type="PANTHER" id="PTHR30579:SF8">
    <property type="entry name" value="HTH-TYPE TRANSCRIPTIONAL REGULATOR HDFR"/>
    <property type="match status" value="1"/>
</dbReference>
<dbReference type="PANTHER" id="PTHR30579">
    <property type="entry name" value="TRANSCRIPTIONAL REGULATOR"/>
    <property type="match status" value="1"/>
</dbReference>
<dbReference type="Pfam" id="PF00126">
    <property type="entry name" value="HTH_1"/>
    <property type="match status" value="1"/>
</dbReference>
<dbReference type="Pfam" id="PF03466">
    <property type="entry name" value="LysR_substrate"/>
    <property type="match status" value="1"/>
</dbReference>
<dbReference type="PRINTS" id="PR00039">
    <property type="entry name" value="HTHLYSR"/>
</dbReference>
<dbReference type="SUPFAM" id="SSF53850">
    <property type="entry name" value="Periplasmic binding protein-like II"/>
    <property type="match status" value="1"/>
</dbReference>
<dbReference type="SUPFAM" id="SSF46785">
    <property type="entry name" value="Winged helix' DNA-binding domain"/>
    <property type="match status" value="1"/>
</dbReference>
<dbReference type="PROSITE" id="PS50931">
    <property type="entry name" value="HTH_LYSR"/>
    <property type="match status" value="1"/>
</dbReference>
<sequence>MDTELLKTFLEVSRTRHFGRAAEALYLTQSAVSFRIRQLENQLGVNLFTRHRNNIRLTTAGEKLLPYAETLMNTWQAARKEVAHTSRHNEFSIGASASLWECMLNAWLGRLYQLQEPQSGLQFEARIAQRQSLVKQLHERQLDLLITTEAPKMDEFSSQLLGHFTLALYCSSPARKKSELNYLRLEWGPDFQQHETGLIAADEVPVLTTSSAELARQQLSALNGCSWLPVNWVNEKGGLHTVADSATLSRPLYAIWLQNSDKYSLICDLLKTDVLDDQ</sequence>
<protein>
    <recommendedName>
        <fullName evidence="1">HTH-type transcriptional regulator HdfR</fullName>
    </recommendedName>
    <alternativeName>
        <fullName evidence="1">H-NS-dependent flhDC regulator</fullName>
    </alternativeName>
</protein>
<keyword id="KW-0238">DNA-binding</keyword>
<keyword id="KW-0678">Repressor</keyword>
<keyword id="KW-0804">Transcription</keyword>
<keyword id="KW-0805">Transcription regulation</keyword>
<feature type="chain" id="PRO_1000139676" description="HTH-type transcriptional regulator HdfR">
    <location>
        <begin position="1"/>
        <end position="278"/>
    </location>
</feature>
<feature type="domain" description="HTH lysR-type" evidence="1">
    <location>
        <begin position="1"/>
        <end position="58"/>
    </location>
</feature>
<feature type="DNA-binding region" description="H-T-H motif" evidence="1">
    <location>
        <begin position="18"/>
        <end position="37"/>
    </location>
</feature>
<proteinExistence type="inferred from homology"/>
<organism>
    <name type="scientific">Salmonella schwarzengrund (strain CVM19633)</name>
    <dbReference type="NCBI Taxonomy" id="439843"/>
    <lineage>
        <taxon>Bacteria</taxon>
        <taxon>Pseudomonadati</taxon>
        <taxon>Pseudomonadota</taxon>
        <taxon>Gammaproteobacteria</taxon>
        <taxon>Enterobacterales</taxon>
        <taxon>Enterobacteriaceae</taxon>
        <taxon>Salmonella</taxon>
    </lineage>
</organism>
<evidence type="ECO:0000255" key="1">
    <source>
        <dbReference type="HAMAP-Rule" id="MF_01233"/>
    </source>
</evidence>
<evidence type="ECO:0000305" key="2"/>
<accession>B4TNR5</accession>